<organism>
    <name type="scientific">Drosophila melanogaster</name>
    <name type="common">Fruit fly</name>
    <dbReference type="NCBI Taxonomy" id="7227"/>
    <lineage>
        <taxon>Eukaryota</taxon>
        <taxon>Metazoa</taxon>
        <taxon>Ecdysozoa</taxon>
        <taxon>Arthropoda</taxon>
        <taxon>Hexapoda</taxon>
        <taxon>Insecta</taxon>
        <taxon>Pterygota</taxon>
        <taxon>Neoptera</taxon>
        <taxon>Endopterygota</taxon>
        <taxon>Diptera</taxon>
        <taxon>Brachycera</taxon>
        <taxon>Muscomorpha</taxon>
        <taxon>Ephydroidea</taxon>
        <taxon>Drosophilidae</taxon>
        <taxon>Drosophila</taxon>
        <taxon>Sophophora</taxon>
    </lineage>
</organism>
<protein>
    <recommendedName>
        <fullName>Gustatory receptor for sugar taste 64c</fullName>
    </recommendedName>
</protein>
<dbReference type="EMBL" id="AE014296">
    <property type="protein sequence ID" value="AAF47824.2"/>
    <property type="molecule type" value="Genomic_DNA"/>
</dbReference>
<dbReference type="RefSeq" id="NP_001246610.1">
    <property type="nucleotide sequence ID" value="NM_001259681.1"/>
</dbReference>
<dbReference type="RefSeq" id="NP_523913.2">
    <property type="nucleotide sequence ID" value="NM_079189.4"/>
</dbReference>
<dbReference type="SMR" id="P83295"/>
<dbReference type="FunCoup" id="P83295">
    <property type="interactions" value="34"/>
</dbReference>
<dbReference type="STRING" id="7227.FBpp0301543"/>
<dbReference type="PaxDb" id="7227-FBpp0301543"/>
<dbReference type="DNASU" id="117479"/>
<dbReference type="EnsemblMetazoa" id="FBtr0073196">
    <property type="protein sequence ID" value="FBpp0073052"/>
    <property type="gene ID" value="FBgn0045477"/>
</dbReference>
<dbReference type="EnsemblMetazoa" id="FBtr0309790">
    <property type="protein sequence ID" value="FBpp0301543"/>
    <property type="gene ID" value="FBgn0045477"/>
</dbReference>
<dbReference type="GeneID" id="117479"/>
<dbReference type="KEGG" id="dme:Dmel_CG32256"/>
<dbReference type="AGR" id="FB:FBgn0045477"/>
<dbReference type="CTD" id="117479"/>
<dbReference type="FlyBase" id="FBgn0045477">
    <property type="gene designation" value="Gr64c"/>
</dbReference>
<dbReference type="VEuPathDB" id="VectorBase:FBgn0045477"/>
<dbReference type="eggNOG" id="ENOG502T85S">
    <property type="taxonomic scope" value="Eukaryota"/>
</dbReference>
<dbReference type="GeneTree" id="ENSGT00530000064347"/>
<dbReference type="HOGENOM" id="CLU_043581_1_0_1"/>
<dbReference type="InParanoid" id="P83295"/>
<dbReference type="OMA" id="WEQLRYD"/>
<dbReference type="OrthoDB" id="5800391at2759"/>
<dbReference type="PhylomeDB" id="P83295"/>
<dbReference type="BioGRID-ORCS" id="117479">
    <property type="hits" value="0 hits in 1 CRISPR screen"/>
</dbReference>
<dbReference type="GenomeRNAi" id="117479"/>
<dbReference type="PRO" id="PR:P83295"/>
<dbReference type="Proteomes" id="UP000000803">
    <property type="component" value="Chromosome 3L"/>
</dbReference>
<dbReference type="Bgee" id="FBgn0045477">
    <property type="expression patterns" value="Expressed in tagma and 1 other cell type or tissue"/>
</dbReference>
<dbReference type="GO" id="GO:0016020">
    <property type="term" value="C:membrane"/>
    <property type="evidence" value="ECO:0000303"/>
    <property type="project" value="UniProtKB"/>
</dbReference>
<dbReference type="GO" id="GO:0005886">
    <property type="term" value="C:plasma membrane"/>
    <property type="evidence" value="ECO:0000250"/>
    <property type="project" value="FlyBase"/>
</dbReference>
<dbReference type="GO" id="GO:0170023">
    <property type="term" value="F:ionotropic sweet taste receptor activity"/>
    <property type="evidence" value="ECO:0000315"/>
    <property type="project" value="FlyBase"/>
</dbReference>
<dbReference type="GO" id="GO:0015276">
    <property type="term" value="F:ligand-gated monoatomic ion channel activity"/>
    <property type="evidence" value="ECO:0000250"/>
    <property type="project" value="FlyBase"/>
</dbReference>
<dbReference type="GO" id="GO:0033041">
    <property type="term" value="F:sweet taste receptor activity"/>
    <property type="evidence" value="ECO:0000318"/>
    <property type="project" value="GO_Central"/>
</dbReference>
<dbReference type="GO" id="GO:0008527">
    <property type="term" value="F:taste receptor activity"/>
    <property type="evidence" value="ECO:0000303"/>
    <property type="project" value="UniProtKB"/>
</dbReference>
<dbReference type="GO" id="GO:0034220">
    <property type="term" value="P:monoatomic ion transmembrane transport"/>
    <property type="evidence" value="ECO:0000250"/>
    <property type="project" value="FlyBase"/>
</dbReference>
<dbReference type="GO" id="GO:0050916">
    <property type="term" value="P:sensory perception of sweet taste"/>
    <property type="evidence" value="ECO:0000315"/>
    <property type="project" value="FlyBase"/>
</dbReference>
<dbReference type="GO" id="GO:0050909">
    <property type="term" value="P:sensory perception of taste"/>
    <property type="evidence" value="ECO:0000303"/>
    <property type="project" value="UniProtKB"/>
</dbReference>
<dbReference type="GO" id="GO:0007165">
    <property type="term" value="P:signal transduction"/>
    <property type="evidence" value="ECO:0007669"/>
    <property type="project" value="UniProtKB-KW"/>
</dbReference>
<dbReference type="InterPro" id="IPR009318">
    <property type="entry name" value="Gustatory_rcpt"/>
</dbReference>
<dbReference type="PANTHER" id="PTHR21421">
    <property type="entry name" value="GUSTATORY RECEPTOR"/>
    <property type="match status" value="1"/>
</dbReference>
<dbReference type="PANTHER" id="PTHR21421:SF35">
    <property type="entry name" value="GUSTATORY RECEPTOR FOR SUGAR TASTE 64B-RELATED"/>
    <property type="match status" value="1"/>
</dbReference>
<dbReference type="Pfam" id="PF06151">
    <property type="entry name" value="Trehalose_recp"/>
    <property type="match status" value="1"/>
</dbReference>
<dbReference type="PIRSF" id="PIRSF038981">
    <property type="entry name" value="GRP"/>
    <property type="match status" value="1"/>
</dbReference>
<sequence>MQQSGQKGTRNTLQHAIGPVLVIAQFFGVLPVAGVWPSCRPERVRFRWISLSLLAALILFVFSIVDCALSSKVVFDHGLKIYTIGSLSFSVICIFCFGVFLLLSRRWPYIIRRTAECEQIFLEPEYDCSYGRGYSSRLRLWGVCMLVAALCEHSTYVGSALYNNHLAIVECKLDANFWQNYFQRERQQLFLIMHFTAWWIPFIEWTTLSMTFVWNFVDIFLILICRGMQMRFQQMHWRIRQHVRQQMPNEFWQRIRCDLLDLSDLLGIYDKELSGLIVLSCAHNMYFVCVQIYHSFQSKGNYADELYFWFCLSYVIIRVLNMMFAASSIPQEAKEISYTLYEIPTEFWCVELRRLNEIFLSDHFALSGKGYFLLTRRLIFAMAATLMVYELVLINQMAGSEVQKSFCEGGVGSSKSIFS</sequence>
<reference key="1">
    <citation type="journal article" date="2000" name="Science">
        <title>The genome sequence of Drosophila melanogaster.</title>
        <authorList>
            <person name="Adams M.D."/>
            <person name="Celniker S.E."/>
            <person name="Holt R.A."/>
            <person name="Evans C.A."/>
            <person name="Gocayne J.D."/>
            <person name="Amanatides P.G."/>
            <person name="Scherer S.E."/>
            <person name="Li P.W."/>
            <person name="Hoskins R.A."/>
            <person name="Galle R.F."/>
            <person name="George R.A."/>
            <person name="Lewis S.E."/>
            <person name="Richards S."/>
            <person name="Ashburner M."/>
            <person name="Henderson S.N."/>
            <person name="Sutton G.G."/>
            <person name="Wortman J.R."/>
            <person name="Yandell M.D."/>
            <person name="Zhang Q."/>
            <person name="Chen L.X."/>
            <person name="Brandon R.C."/>
            <person name="Rogers Y.-H.C."/>
            <person name="Blazej R.G."/>
            <person name="Champe M."/>
            <person name="Pfeiffer B.D."/>
            <person name="Wan K.H."/>
            <person name="Doyle C."/>
            <person name="Baxter E.G."/>
            <person name="Helt G."/>
            <person name="Nelson C.R."/>
            <person name="Miklos G.L.G."/>
            <person name="Abril J.F."/>
            <person name="Agbayani A."/>
            <person name="An H.-J."/>
            <person name="Andrews-Pfannkoch C."/>
            <person name="Baldwin D."/>
            <person name="Ballew R.M."/>
            <person name="Basu A."/>
            <person name="Baxendale J."/>
            <person name="Bayraktaroglu L."/>
            <person name="Beasley E.M."/>
            <person name="Beeson K.Y."/>
            <person name="Benos P.V."/>
            <person name="Berman B.P."/>
            <person name="Bhandari D."/>
            <person name="Bolshakov S."/>
            <person name="Borkova D."/>
            <person name="Botchan M.R."/>
            <person name="Bouck J."/>
            <person name="Brokstein P."/>
            <person name="Brottier P."/>
            <person name="Burtis K.C."/>
            <person name="Busam D.A."/>
            <person name="Butler H."/>
            <person name="Cadieu E."/>
            <person name="Center A."/>
            <person name="Chandra I."/>
            <person name="Cherry J.M."/>
            <person name="Cawley S."/>
            <person name="Dahlke C."/>
            <person name="Davenport L.B."/>
            <person name="Davies P."/>
            <person name="de Pablos B."/>
            <person name="Delcher A."/>
            <person name="Deng Z."/>
            <person name="Mays A.D."/>
            <person name="Dew I."/>
            <person name="Dietz S.M."/>
            <person name="Dodson K."/>
            <person name="Doup L.E."/>
            <person name="Downes M."/>
            <person name="Dugan-Rocha S."/>
            <person name="Dunkov B.C."/>
            <person name="Dunn P."/>
            <person name="Durbin K.J."/>
            <person name="Evangelista C.C."/>
            <person name="Ferraz C."/>
            <person name="Ferriera S."/>
            <person name="Fleischmann W."/>
            <person name="Fosler C."/>
            <person name="Gabrielian A.E."/>
            <person name="Garg N.S."/>
            <person name="Gelbart W.M."/>
            <person name="Glasser K."/>
            <person name="Glodek A."/>
            <person name="Gong F."/>
            <person name="Gorrell J.H."/>
            <person name="Gu Z."/>
            <person name="Guan P."/>
            <person name="Harris M."/>
            <person name="Harris N.L."/>
            <person name="Harvey D.A."/>
            <person name="Heiman T.J."/>
            <person name="Hernandez J.R."/>
            <person name="Houck J."/>
            <person name="Hostin D."/>
            <person name="Houston K.A."/>
            <person name="Howland T.J."/>
            <person name="Wei M.-H."/>
            <person name="Ibegwam C."/>
            <person name="Jalali M."/>
            <person name="Kalush F."/>
            <person name="Karpen G.H."/>
            <person name="Ke Z."/>
            <person name="Kennison J.A."/>
            <person name="Ketchum K.A."/>
            <person name="Kimmel B.E."/>
            <person name="Kodira C.D."/>
            <person name="Kraft C.L."/>
            <person name="Kravitz S."/>
            <person name="Kulp D."/>
            <person name="Lai Z."/>
            <person name="Lasko P."/>
            <person name="Lei Y."/>
            <person name="Levitsky A.A."/>
            <person name="Li J.H."/>
            <person name="Li Z."/>
            <person name="Liang Y."/>
            <person name="Lin X."/>
            <person name="Liu X."/>
            <person name="Mattei B."/>
            <person name="McIntosh T.C."/>
            <person name="McLeod M.P."/>
            <person name="McPherson D."/>
            <person name="Merkulov G."/>
            <person name="Milshina N.V."/>
            <person name="Mobarry C."/>
            <person name="Morris J."/>
            <person name="Moshrefi A."/>
            <person name="Mount S.M."/>
            <person name="Moy M."/>
            <person name="Murphy B."/>
            <person name="Murphy L."/>
            <person name="Muzny D.M."/>
            <person name="Nelson D.L."/>
            <person name="Nelson D.R."/>
            <person name="Nelson K.A."/>
            <person name="Nixon K."/>
            <person name="Nusskern D.R."/>
            <person name="Pacleb J.M."/>
            <person name="Palazzolo M."/>
            <person name="Pittman G.S."/>
            <person name="Pan S."/>
            <person name="Pollard J."/>
            <person name="Puri V."/>
            <person name="Reese M.G."/>
            <person name="Reinert K."/>
            <person name="Remington K."/>
            <person name="Saunders R.D.C."/>
            <person name="Scheeler F."/>
            <person name="Shen H."/>
            <person name="Shue B.C."/>
            <person name="Siden-Kiamos I."/>
            <person name="Simpson M."/>
            <person name="Skupski M.P."/>
            <person name="Smith T.J."/>
            <person name="Spier E."/>
            <person name="Spradling A.C."/>
            <person name="Stapleton M."/>
            <person name="Strong R."/>
            <person name="Sun E."/>
            <person name="Svirskas R."/>
            <person name="Tector C."/>
            <person name="Turner R."/>
            <person name="Venter E."/>
            <person name="Wang A.H."/>
            <person name="Wang X."/>
            <person name="Wang Z.-Y."/>
            <person name="Wassarman D.A."/>
            <person name="Weinstock G.M."/>
            <person name="Weissenbach J."/>
            <person name="Williams S.M."/>
            <person name="Woodage T."/>
            <person name="Worley K.C."/>
            <person name="Wu D."/>
            <person name="Yang S."/>
            <person name="Yao Q.A."/>
            <person name="Ye J."/>
            <person name="Yeh R.-F."/>
            <person name="Zaveri J.S."/>
            <person name="Zhan M."/>
            <person name="Zhang G."/>
            <person name="Zhao Q."/>
            <person name="Zheng L."/>
            <person name="Zheng X.H."/>
            <person name="Zhong F.N."/>
            <person name="Zhong W."/>
            <person name="Zhou X."/>
            <person name="Zhu S.C."/>
            <person name="Zhu X."/>
            <person name="Smith H.O."/>
            <person name="Gibbs R.A."/>
            <person name="Myers E.W."/>
            <person name="Rubin G.M."/>
            <person name="Venter J.C."/>
        </authorList>
    </citation>
    <scope>NUCLEOTIDE SEQUENCE [LARGE SCALE GENOMIC DNA]</scope>
    <source>
        <strain>Berkeley</strain>
    </source>
</reference>
<reference key="2">
    <citation type="journal article" date="2002" name="Genome Biol.">
        <title>Annotation of the Drosophila melanogaster euchromatic genome: a systematic review.</title>
        <authorList>
            <person name="Misra S."/>
            <person name="Crosby M.A."/>
            <person name="Mungall C.J."/>
            <person name="Matthews B.B."/>
            <person name="Campbell K.S."/>
            <person name="Hradecky P."/>
            <person name="Huang Y."/>
            <person name="Kaminker J.S."/>
            <person name="Millburn G.H."/>
            <person name="Prochnik S.E."/>
            <person name="Smith C.D."/>
            <person name="Tupy J.L."/>
            <person name="Whitfield E.J."/>
            <person name="Bayraktaroglu L."/>
            <person name="Berman B.P."/>
            <person name="Bettencourt B.R."/>
            <person name="Celniker S.E."/>
            <person name="de Grey A.D.N.J."/>
            <person name="Drysdale R.A."/>
            <person name="Harris N.L."/>
            <person name="Richter J."/>
            <person name="Russo S."/>
            <person name="Schroeder A.J."/>
            <person name="Shu S.Q."/>
            <person name="Stapleton M."/>
            <person name="Yamada C."/>
            <person name="Ashburner M."/>
            <person name="Gelbart W.M."/>
            <person name="Rubin G.M."/>
            <person name="Lewis S.E."/>
        </authorList>
    </citation>
    <scope>GENOME REANNOTATION</scope>
    <source>
        <strain>Berkeley</strain>
    </source>
</reference>
<reference key="3">
    <citation type="journal article" date="2001" name="Curr. Biol.">
        <title>Spatially restricted expression of candidate taste receptors in the Drosophila gustatory system.</title>
        <authorList>
            <person name="Dunipace L."/>
            <person name="Meister S."/>
            <person name="McNealy C."/>
            <person name="Amrein H."/>
        </authorList>
    </citation>
    <scope>IDENTIFICATION</scope>
</reference>
<reference key="4">
    <citation type="journal article" date="2003" name="Proc. Natl. Acad. Sci. U.S.A.">
        <title>Molecular evolution of the insect chemoreceptor gene superfamily in Drosophila melanogaster.</title>
        <authorList>
            <person name="Robertson H.M."/>
            <person name="Warr C.G."/>
            <person name="Carlson J.R."/>
        </authorList>
    </citation>
    <scope>PREDICTION OF FUNCTION</scope>
</reference>
<reference key="5">
    <citation type="journal article" date="2007" name="Proc. Natl. Acad. Sci. U.S.A.">
        <title>A Drosophila gustatory receptor required for the responses to sucrose, glucose, and maltose identified by mRNA tagging.</title>
        <authorList>
            <person name="Jiao Y."/>
            <person name="Moon S.J."/>
            <person name="Montell C."/>
        </authorList>
    </citation>
    <scope>FUNCTION</scope>
    <scope>TISSUE SPECIFICITY</scope>
</reference>
<reference key="6">
    <citation type="journal article" date="2013" name="Curr. Biol.">
        <title>The molecular basis of sugar sensing in Drosophila larvae.</title>
        <authorList>
            <person name="Mishra D."/>
            <person name="Miyamoto T."/>
            <person name="Rezenom Y.H."/>
            <person name="Broussard A."/>
            <person name="Yavuz A."/>
            <person name="Slone J."/>
            <person name="Russell D.H."/>
            <person name="Amrein H."/>
        </authorList>
    </citation>
    <scope>FUNCTION</scope>
</reference>
<keyword id="KW-1003">Cell membrane</keyword>
<keyword id="KW-0472">Membrane</keyword>
<keyword id="KW-0675">Receptor</keyword>
<keyword id="KW-1185">Reference proteome</keyword>
<keyword id="KW-0807">Transducer</keyword>
<keyword id="KW-0812">Transmembrane</keyword>
<keyword id="KW-1133">Transmembrane helix</keyword>
<gene>
    <name type="primary">Gr64c</name>
    <name type="ORF">CG32256</name>
</gene>
<proteinExistence type="evidence at transcript level"/>
<comment type="function">
    <text evidence="3 4">One of the few identified sugar gustatory receptors identified so far and which promotes the starvation-induced increase of feeding motivation.</text>
</comment>
<comment type="subcellular location">
    <subcellularLocation>
        <location evidence="1">Cell membrane</location>
        <topology evidence="1">Multi-pass membrane protein</topology>
    </subcellularLocation>
</comment>
<comment type="tissue specificity">
    <text evidence="3">Expressed in Gr5a-expressing sugar-sensing cells.</text>
</comment>
<comment type="similarity">
    <text evidence="5">Belongs to the insect chemoreceptor superfamily. Gustatory receptor (GR) family. Gr5a subfamily.</text>
</comment>
<name>GR64C_DROME</name>
<feature type="chain" id="PRO_0000216530" description="Gustatory receptor for sugar taste 64c">
    <location>
        <begin position="1"/>
        <end position="419"/>
    </location>
</feature>
<feature type="topological domain" description="Cytoplasmic" evidence="1">
    <location>
        <begin position="1"/>
        <end position="15"/>
    </location>
</feature>
<feature type="transmembrane region" description="Helical; Name=1" evidence="2">
    <location>
        <begin position="16"/>
        <end position="36"/>
    </location>
</feature>
<feature type="topological domain" description="Extracellular" evidence="1">
    <location>
        <begin position="37"/>
        <end position="48"/>
    </location>
</feature>
<feature type="transmembrane region" description="Helical; Name=2" evidence="2">
    <location>
        <begin position="49"/>
        <end position="69"/>
    </location>
</feature>
<feature type="topological domain" description="Cytoplasmic" evidence="1">
    <location>
        <begin position="70"/>
        <end position="82"/>
    </location>
</feature>
<feature type="transmembrane region" description="Helical; Name=3" evidence="2">
    <location>
        <begin position="83"/>
        <end position="103"/>
    </location>
</feature>
<feature type="topological domain" description="Extracellular" evidence="1">
    <location>
        <begin position="104"/>
        <end position="139"/>
    </location>
</feature>
<feature type="transmembrane region" description="Helical; Name=4" evidence="2">
    <location>
        <begin position="140"/>
        <end position="160"/>
    </location>
</feature>
<feature type="topological domain" description="Cytoplasmic" evidence="1">
    <location>
        <begin position="161"/>
        <end position="204"/>
    </location>
</feature>
<feature type="transmembrane region" description="Helical; Name=5" evidence="2">
    <location>
        <begin position="205"/>
        <end position="225"/>
    </location>
</feature>
<feature type="topological domain" description="Extracellular" evidence="1">
    <location>
        <begin position="226"/>
        <end position="305"/>
    </location>
</feature>
<feature type="transmembrane region" description="Helical; Name=6" evidence="2">
    <location>
        <begin position="306"/>
        <end position="326"/>
    </location>
</feature>
<feature type="topological domain" description="Cytoplasmic" evidence="1">
    <location>
        <begin position="327"/>
        <end position="377"/>
    </location>
</feature>
<feature type="transmembrane region" description="Helical; Name=7" evidence="2">
    <location>
        <begin position="378"/>
        <end position="398"/>
    </location>
</feature>
<feature type="topological domain" description="Extracellular" evidence="1">
    <location>
        <begin position="399"/>
        <end position="419"/>
    </location>
</feature>
<evidence type="ECO:0000250" key="1"/>
<evidence type="ECO:0000255" key="2"/>
<evidence type="ECO:0000269" key="3">
    <source>
    </source>
</evidence>
<evidence type="ECO:0000269" key="4">
    <source>
    </source>
</evidence>
<evidence type="ECO:0000305" key="5"/>
<accession>P83295</accession>
<accession>Q9VZJ7</accession>